<evidence type="ECO:0000250" key="1"/>
<evidence type="ECO:0000269" key="2">
    <source>
    </source>
</evidence>
<evidence type="ECO:0000305" key="3"/>
<evidence type="ECO:0000305" key="4">
    <source>
    </source>
</evidence>
<feature type="chain" id="PRO_0000187287" description="Pyrroline-5-carboxylate reductase 3">
    <location>
        <begin position="1"/>
        <end position="272"/>
    </location>
</feature>
<proteinExistence type="inferred from homology"/>
<keyword id="KW-0028">Amino-acid biosynthesis</keyword>
<keyword id="KW-0963">Cytoplasm</keyword>
<keyword id="KW-0521">NADP</keyword>
<keyword id="KW-0560">Oxidoreductase</keyword>
<keyword id="KW-0641">Proline biosynthesis</keyword>
<keyword id="KW-1185">Reference proteome</keyword>
<accession>Q00777</accession>
<dbReference type="EC" id="1.5.1.2"/>
<dbReference type="EMBL" id="AJ002571">
    <property type="protein sequence ID" value="CAA05571.1"/>
    <property type="molecule type" value="Genomic_DNA"/>
</dbReference>
<dbReference type="EMBL" id="AL009126">
    <property type="protein sequence ID" value="CAB13148.1"/>
    <property type="molecule type" value="Genomic_DNA"/>
</dbReference>
<dbReference type="EMBL" id="X56678">
    <property type="protein sequence ID" value="CAA40001.1"/>
    <property type="molecule type" value="Genomic_DNA"/>
</dbReference>
<dbReference type="PIR" id="F69855">
    <property type="entry name" value="F69855"/>
</dbReference>
<dbReference type="RefSeq" id="WP_003232626.1">
    <property type="nucleotide sequence ID" value="NZ_OZ025638.1"/>
</dbReference>
<dbReference type="SMR" id="Q00777"/>
<dbReference type="FunCoup" id="Q00777">
    <property type="interactions" value="156"/>
</dbReference>
<dbReference type="STRING" id="224308.BSU12910"/>
<dbReference type="PaxDb" id="224308-BSU12910"/>
<dbReference type="EnsemblBacteria" id="CAB13148">
    <property type="protein sequence ID" value="CAB13148"/>
    <property type="gene ID" value="BSU_12910"/>
</dbReference>
<dbReference type="GeneID" id="936776"/>
<dbReference type="KEGG" id="bsu:BSU12910"/>
<dbReference type="PATRIC" id="fig|224308.179.peg.1403"/>
<dbReference type="eggNOG" id="COG0345">
    <property type="taxonomic scope" value="Bacteria"/>
</dbReference>
<dbReference type="InParanoid" id="Q00777"/>
<dbReference type="OrthoDB" id="9805754at2"/>
<dbReference type="PhylomeDB" id="Q00777"/>
<dbReference type="BioCyc" id="BSUB:BSU12910-MONOMER"/>
<dbReference type="UniPathway" id="UPA00098">
    <property type="reaction ID" value="UER00361"/>
</dbReference>
<dbReference type="Proteomes" id="UP000001570">
    <property type="component" value="Chromosome"/>
</dbReference>
<dbReference type="GO" id="GO:0005737">
    <property type="term" value="C:cytoplasm"/>
    <property type="evidence" value="ECO:0007669"/>
    <property type="project" value="UniProtKB-SubCell"/>
</dbReference>
<dbReference type="GO" id="GO:0004735">
    <property type="term" value="F:pyrroline-5-carboxylate reductase activity"/>
    <property type="evidence" value="ECO:0000318"/>
    <property type="project" value="GO_Central"/>
</dbReference>
<dbReference type="GO" id="GO:0055129">
    <property type="term" value="P:L-proline biosynthetic process"/>
    <property type="evidence" value="ECO:0000318"/>
    <property type="project" value="GO_Central"/>
</dbReference>
<dbReference type="Gene3D" id="3.40.50.720">
    <property type="entry name" value="NAD(P)-binding Rossmann-like Domain"/>
    <property type="match status" value="1"/>
</dbReference>
<dbReference type="Gene3D" id="1.10.3730.10">
    <property type="entry name" value="ProC C-terminal domain-like"/>
    <property type="match status" value="1"/>
</dbReference>
<dbReference type="InterPro" id="IPR008927">
    <property type="entry name" value="6-PGluconate_DH-like_C_sf"/>
</dbReference>
<dbReference type="InterPro" id="IPR036291">
    <property type="entry name" value="NAD(P)-bd_dom_sf"/>
</dbReference>
<dbReference type="InterPro" id="IPR028939">
    <property type="entry name" value="P5C_Rdtase_cat_N"/>
</dbReference>
<dbReference type="InterPro" id="IPR029036">
    <property type="entry name" value="P5CR_dimer"/>
</dbReference>
<dbReference type="InterPro" id="IPR000304">
    <property type="entry name" value="Pyrroline-COOH_reductase"/>
</dbReference>
<dbReference type="NCBIfam" id="NF005384">
    <property type="entry name" value="PRK06928.1"/>
    <property type="match status" value="1"/>
</dbReference>
<dbReference type="PANTHER" id="PTHR11645">
    <property type="entry name" value="PYRROLINE-5-CARBOXYLATE REDUCTASE"/>
    <property type="match status" value="1"/>
</dbReference>
<dbReference type="PANTHER" id="PTHR11645:SF53">
    <property type="entry name" value="PYRROLINE-5-CARBOXYLATE REDUCTASE 3"/>
    <property type="match status" value="1"/>
</dbReference>
<dbReference type="Pfam" id="PF03807">
    <property type="entry name" value="F420_oxidored"/>
    <property type="match status" value="1"/>
</dbReference>
<dbReference type="Pfam" id="PF14748">
    <property type="entry name" value="P5CR_dimer"/>
    <property type="match status" value="1"/>
</dbReference>
<dbReference type="PIRSF" id="PIRSF000193">
    <property type="entry name" value="Pyrrol-5-carb_rd"/>
    <property type="match status" value="1"/>
</dbReference>
<dbReference type="SUPFAM" id="SSF48179">
    <property type="entry name" value="6-phosphogluconate dehydrogenase C-terminal domain-like"/>
    <property type="match status" value="1"/>
</dbReference>
<dbReference type="SUPFAM" id="SSF51735">
    <property type="entry name" value="NAD(P)-binding Rossmann-fold domains"/>
    <property type="match status" value="1"/>
</dbReference>
<protein>
    <recommendedName>
        <fullName>Pyrroline-5-carboxylate reductase 3</fullName>
        <shortName>P5C reductase 3</shortName>
        <shortName>P5CR 3</shortName>
        <ecNumber>1.5.1.2</ecNumber>
    </recommendedName>
    <alternativeName>
        <fullName>PCA reductase 3</fullName>
    </alternativeName>
</protein>
<gene>
    <name type="primary">proG</name>
    <name type="synonym">ykeA</name>
    <name type="synonym">yzcA</name>
    <name type="ordered locus">BSU12910</name>
</gene>
<sequence>MEQIGLIGYGSMADMIARQLLKHEQIKENELFIETRTKGERLRALMSDYPNVSADPLENWANTCQLILICVPPLHVIETMRRLYPYVNRNTHIVSIAAGVPLRLLEAETEAGISRVIPAITSEAEAGISLVVHSEALAAEKKERLNELLSVFSRVREIKESNLDVASNLTSSAPGFIAAIFEELALSAVRNSSLSKEEAFDFLIHSLYGTGKMLIEKNMSFEETLERVATKGGITGEGAEVIHASVPDVFDEVFERTLRKYELLTEQVGKQT</sequence>
<comment type="function">
    <text evidence="4">Catalyzes the reduction of 1-pyrroline-5-carboxylate (PCA) to L-proline.</text>
</comment>
<comment type="catalytic activity">
    <reaction>
        <text>L-proline + NADP(+) = (S)-1-pyrroline-5-carboxylate + NADPH + 2 H(+)</text>
        <dbReference type="Rhea" id="RHEA:14109"/>
        <dbReference type="ChEBI" id="CHEBI:15378"/>
        <dbReference type="ChEBI" id="CHEBI:17388"/>
        <dbReference type="ChEBI" id="CHEBI:57783"/>
        <dbReference type="ChEBI" id="CHEBI:58349"/>
        <dbReference type="ChEBI" id="CHEBI:60039"/>
        <dbReference type="EC" id="1.5.1.2"/>
    </reaction>
</comment>
<comment type="catalytic activity">
    <reaction>
        <text>L-proline + NAD(+) = (S)-1-pyrroline-5-carboxylate + NADH + 2 H(+)</text>
        <dbReference type="Rhea" id="RHEA:14105"/>
        <dbReference type="ChEBI" id="CHEBI:15378"/>
        <dbReference type="ChEBI" id="CHEBI:17388"/>
        <dbReference type="ChEBI" id="CHEBI:57540"/>
        <dbReference type="ChEBI" id="CHEBI:57945"/>
        <dbReference type="ChEBI" id="CHEBI:60039"/>
        <dbReference type="EC" id="1.5.1.2"/>
    </reaction>
</comment>
<comment type="pathway">
    <text evidence="2">Amino-acid biosynthesis; L-proline biosynthesis; L-proline from L-glutamate 5-semialdehyde: step 1/1.</text>
</comment>
<comment type="subcellular location">
    <subcellularLocation>
        <location evidence="1">Cytoplasm</location>
    </subcellularLocation>
</comment>
<comment type="disruption phenotype">
    <text evidence="2">The proG proH proI triple mutant is auxotrophic for proline.</text>
</comment>
<comment type="similarity">
    <text evidence="3">Belongs to the pyrroline-5-carboxylate reductase family.</text>
</comment>
<organism>
    <name type="scientific">Bacillus subtilis (strain 168)</name>
    <dbReference type="NCBI Taxonomy" id="224308"/>
    <lineage>
        <taxon>Bacteria</taxon>
        <taxon>Bacillati</taxon>
        <taxon>Bacillota</taxon>
        <taxon>Bacilli</taxon>
        <taxon>Bacillales</taxon>
        <taxon>Bacillaceae</taxon>
        <taxon>Bacillus</taxon>
    </lineage>
</organism>
<name>P5CR3_BACSU</name>
<reference key="1">
    <citation type="submission" date="1997-11" db="EMBL/GenBank/DDBJ databases">
        <title>Sequence of the Bacillus subtilis genome between xlyA and ykoR.</title>
        <authorList>
            <person name="Devine K.M."/>
        </authorList>
    </citation>
    <scope>NUCLEOTIDE SEQUENCE [GENOMIC DNA]</scope>
    <source>
        <strain>168</strain>
    </source>
</reference>
<reference key="2">
    <citation type="journal article" date="1997" name="Nature">
        <title>The complete genome sequence of the Gram-positive bacterium Bacillus subtilis.</title>
        <authorList>
            <person name="Kunst F."/>
            <person name="Ogasawara N."/>
            <person name="Moszer I."/>
            <person name="Albertini A.M."/>
            <person name="Alloni G."/>
            <person name="Azevedo V."/>
            <person name="Bertero M.G."/>
            <person name="Bessieres P."/>
            <person name="Bolotin A."/>
            <person name="Borchert S."/>
            <person name="Borriss R."/>
            <person name="Boursier L."/>
            <person name="Brans A."/>
            <person name="Braun M."/>
            <person name="Brignell S.C."/>
            <person name="Bron S."/>
            <person name="Brouillet S."/>
            <person name="Bruschi C.V."/>
            <person name="Caldwell B."/>
            <person name="Capuano V."/>
            <person name="Carter N.M."/>
            <person name="Choi S.-K."/>
            <person name="Codani J.-J."/>
            <person name="Connerton I.F."/>
            <person name="Cummings N.J."/>
            <person name="Daniel R.A."/>
            <person name="Denizot F."/>
            <person name="Devine K.M."/>
            <person name="Duesterhoeft A."/>
            <person name="Ehrlich S.D."/>
            <person name="Emmerson P.T."/>
            <person name="Entian K.-D."/>
            <person name="Errington J."/>
            <person name="Fabret C."/>
            <person name="Ferrari E."/>
            <person name="Foulger D."/>
            <person name="Fritz C."/>
            <person name="Fujita M."/>
            <person name="Fujita Y."/>
            <person name="Fuma S."/>
            <person name="Galizzi A."/>
            <person name="Galleron N."/>
            <person name="Ghim S.-Y."/>
            <person name="Glaser P."/>
            <person name="Goffeau A."/>
            <person name="Golightly E.J."/>
            <person name="Grandi G."/>
            <person name="Guiseppi G."/>
            <person name="Guy B.J."/>
            <person name="Haga K."/>
            <person name="Haiech J."/>
            <person name="Harwood C.R."/>
            <person name="Henaut A."/>
            <person name="Hilbert H."/>
            <person name="Holsappel S."/>
            <person name="Hosono S."/>
            <person name="Hullo M.-F."/>
            <person name="Itaya M."/>
            <person name="Jones L.-M."/>
            <person name="Joris B."/>
            <person name="Karamata D."/>
            <person name="Kasahara Y."/>
            <person name="Klaerr-Blanchard M."/>
            <person name="Klein C."/>
            <person name="Kobayashi Y."/>
            <person name="Koetter P."/>
            <person name="Koningstein G."/>
            <person name="Krogh S."/>
            <person name="Kumano M."/>
            <person name="Kurita K."/>
            <person name="Lapidus A."/>
            <person name="Lardinois S."/>
            <person name="Lauber J."/>
            <person name="Lazarevic V."/>
            <person name="Lee S.-M."/>
            <person name="Levine A."/>
            <person name="Liu H."/>
            <person name="Masuda S."/>
            <person name="Mauel C."/>
            <person name="Medigue C."/>
            <person name="Medina N."/>
            <person name="Mellado R.P."/>
            <person name="Mizuno M."/>
            <person name="Moestl D."/>
            <person name="Nakai S."/>
            <person name="Noback M."/>
            <person name="Noone D."/>
            <person name="O'Reilly M."/>
            <person name="Ogawa K."/>
            <person name="Ogiwara A."/>
            <person name="Oudega B."/>
            <person name="Park S.-H."/>
            <person name="Parro V."/>
            <person name="Pohl T.M."/>
            <person name="Portetelle D."/>
            <person name="Porwollik S."/>
            <person name="Prescott A.M."/>
            <person name="Presecan E."/>
            <person name="Pujic P."/>
            <person name="Purnelle B."/>
            <person name="Rapoport G."/>
            <person name="Rey M."/>
            <person name="Reynolds S."/>
            <person name="Rieger M."/>
            <person name="Rivolta C."/>
            <person name="Rocha E."/>
            <person name="Roche B."/>
            <person name="Rose M."/>
            <person name="Sadaie Y."/>
            <person name="Sato T."/>
            <person name="Scanlan E."/>
            <person name="Schleich S."/>
            <person name="Schroeter R."/>
            <person name="Scoffone F."/>
            <person name="Sekiguchi J."/>
            <person name="Sekowska A."/>
            <person name="Seror S.J."/>
            <person name="Serror P."/>
            <person name="Shin B.-S."/>
            <person name="Soldo B."/>
            <person name="Sorokin A."/>
            <person name="Tacconi E."/>
            <person name="Takagi T."/>
            <person name="Takahashi H."/>
            <person name="Takemaru K."/>
            <person name="Takeuchi M."/>
            <person name="Tamakoshi A."/>
            <person name="Tanaka T."/>
            <person name="Terpstra P."/>
            <person name="Tognoni A."/>
            <person name="Tosato V."/>
            <person name="Uchiyama S."/>
            <person name="Vandenbol M."/>
            <person name="Vannier F."/>
            <person name="Vassarotti A."/>
            <person name="Viari A."/>
            <person name="Wambutt R."/>
            <person name="Wedler E."/>
            <person name="Wedler H."/>
            <person name="Weitzenegger T."/>
            <person name="Winters P."/>
            <person name="Wipat A."/>
            <person name="Yamamoto H."/>
            <person name="Yamane K."/>
            <person name="Yasumoto K."/>
            <person name="Yata K."/>
            <person name="Yoshida K."/>
            <person name="Yoshikawa H.-F."/>
            <person name="Zumstein E."/>
            <person name="Yoshikawa H."/>
            <person name="Danchin A."/>
        </authorList>
    </citation>
    <scope>NUCLEOTIDE SEQUENCE [LARGE SCALE GENOMIC DNA]</scope>
    <source>
        <strain>168</strain>
    </source>
</reference>
<reference key="3">
    <citation type="journal article" date="1991" name="Mol. Microbiol.">
        <title>A Bacillus subtilis dipeptide transport system expressed early during sporulation.</title>
        <authorList>
            <person name="Mathiopoulos C."/>
            <person name="Mueller J.P."/>
            <person name="Slack F.J."/>
            <person name="Murphy C.G."/>
            <person name="Patankar S."/>
            <person name="Bukusoglu G."/>
            <person name="Sonenshein A.L."/>
        </authorList>
    </citation>
    <scope>NUCLEOTIDE SEQUENCE [GENOMIC DNA] OF 247-272</scope>
    <source>
        <strain>168</strain>
    </source>
</reference>
<reference key="4">
    <citation type="journal article" date="2001" name="J. Bacteriol.">
        <title>Multiple genes for the last step of proline biosynthesis in Bacillus subtilis.</title>
        <authorList>
            <person name="Belitsky B.R."/>
            <person name="Brill J."/>
            <person name="Bremer E."/>
            <person name="Sonenshein A.L."/>
        </authorList>
    </citation>
    <scope>FUNCTION</scope>
    <scope>PATHWAY</scope>
    <scope>DISRUPTION PHENOTYPE</scope>
</reference>